<feature type="chain" id="PRO_0000266608" description="Large ribosomal subunit protein uL14">
    <location>
        <begin position="1"/>
        <end position="133"/>
    </location>
</feature>
<keyword id="KW-1185">Reference proteome</keyword>
<keyword id="KW-0687">Ribonucleoprotein</keyword>
<keyword id="KW-0689">Ribosomal protein</keyword>
<keyword id="KW-0694">RNA-binding</keyword>
<keyword id="KW-0699">rRNA-binding</keyword>
<gene>
    <name evidence="1" type="primary">rpl14</name>
    <name type="ordered locus">NEQ092</name>
</gene>
<proteinExistence type="inferred from homology"/>
<accession>Q74N81</accession>
<comment type="function">
    <text evidence="1">Binds to 23S rRNA. Forms part of two intersubunit bridges in the 70S ribosome.</text>
</comment>
<comment type="subunit">
    <text evidence="1">Part of the 50S ribosomal subunit. Forms a cluster with proteins L3 and L24e, part of which may contact the 16S rRNA in 2 intersubunit bridges.</text>
</comment>
<comment type="similarity">
    <text evidence="1">Belongs to the universal ribosomal protein uL14 family.</text>
</comment>
<name>RL14_NANEQ</name>
<organism>
    <name type="scientific">Nanoarchaeum equitans (strain Kin4-M)</name>
    <dbReference type="NCBI Taxonomy" id="228908"/>
    <lineage>
        <taxon>Archaea</taxon>
        <taxon>Nanobdellota</taxon>
        <taxon>Candidatus Nanoarchaeia</taxon>
        <taxon>Nanoarchaeales</taxon>
        <taxon>Nanoarchaeaceae</taxon>
        <taxon>Nanoarchaeum</taxon>
    </lineage>
</organism>
<protein>
    <recommendedName>
        <fullName evidence="1">Large ribosomal subunit protein uL14</fullName>
    </recommendedName>
    <alternativeName>
        <fullName evidence="2">50S ribosomal protein L14</fullName>
    </alternativeName>
</protein>
<dbReference type="EMBL" id="AE017199">
    <property type="protein sequence ID" value="AAR38948.1"/>
    <property type="molecule type" value="Genomic_DNA"/>
</dbReference>
<dbReference type="SMR" id="Q74N81"/>
<dbReference type="STRING" id="228908.NEQ092"/>
<dbReference type="EnsemblBacteria" id="AAR38948">
    <property type="protein sequence ID" value="AAR38948"/>
    <property type="gene ID" value="NEQ092"/>
</dbReference>
<dbReference type="KEGG" id="neq:NEQ092"/>
<dbReference type="PATRIC" id="fig|228908.8.peg.96"/>
<dbReference type="HOGENOM" id="CLU_095071_3_0_2"/>
<dbReference type="Proteomes" id="UP000000578">
    <property type="component" value="Chromosome"/>
</dbReference>
<dbReference type="GO" id="GO:0022625">
    <property type="term" value="C:cytosolic large ribosomal subunit"/>
    <property type="evidence" value="ECO:0007669"/>
    <property type="project" value="TreeGrafter"/>
</dbReference>
<dbReference type="GO" id="GO:0070180">
    <property type="term" value="F:large ribosomal subunit rRNA binding"/>
    <property type="evidence" value="ECO:0007669"/>
    <property type="project" value="TreeGrafter"/>
</dbReference>
<dbReference type="GO" id="GO:0003735">
    <property type="term" value="F:structural constituent of ribosome"/>
    <property type="evidence" value="ECO:0007669"/>
    <property type="project" value="InterPro"/>
</dbReference>
<dbReference type="GO" id="GO:0006412">
    <property type="term" value="P:translation"/>
    <property type="evidence" value="ECO:0007669"/>
    <property type="project" value="UniProtKB-UniRule"/>
</dbReference>
<dbReference type="CDD" id="cd00337">
    <property type="entry name" value="Ribosomal_uL14"/>
    <property type="match status" value="1"/>
</dbReference>
<dbReference type="FunFam" id="2.40.150.20:FF:000007">
    <property type="entry name" value="50S ribosomal protein L14"/>
    <property type="match status" value="1"/>
</dbReference>
<dbReference type="Gene3D" id="2.40.150.20">
    <property type="entry name" value="Ribosomal protein L14"/>
    <property type="match status" value="1"/>
</dbReference>
<dbReference type="HAMAP" id="MF_01367">
    <property type="entry name" value="Ribosomal_uL14"/>
    <property type="match status" value="1"/>
</dbReference>
<dbReference type="InterPro" id="IPR000218">
    <property type="entry name" value="Ribosomal_uL14"/>
</dbReference>
<dbReference type="InterPro" id="IPR019971">
    <property type="entry name" value="Ribosomal_uL14_arc"/>
</dbReference>
<dbReference type="InterPro" id="IPR036853">
    <property type="entry name" value="Ribosomal_uL14_sf"/>
</dbReference>
<dbReference type="NCBIfam" id="NF006344">
    <property type="entry name" value="PRK08571.1"/>
    <property type="match status" value="1"/>
</dbReference>
<dbReference type="NCBIfam" id="TIGR03673">
    <property type="entry name" value="uL14_arch"/>
    <property type="match status" value="1"/>
</dbReference>
<dbReference type="PANTHER" id="PTHR11761">
    <property type="entry name" value="50S/60S RIBOSOMAL PROTEIN L14/L23"/>
    <property type="match status" value="1"/>
</dbReference>
<dbReference type="PANTHER" id="PTHR11761:SF8">
    <property type="entry name" value="LARGE RIBOSOMAL SUBUNIT PROTEIN UL14"/>
    <property type="match status" value="1"/>
</dbReference>
<dbReference type="Pfam" id="PF00238">
    <property type="entry name" value="Ribosomal_L14"/>
    <property type="match status" value="1"/>
</dbReference>
<dbReference type="SMART" id="SM01374">
    <property type="entry name" value="Ribosomal_L14"/>
    <property type="match status" value="1"/>
</dbReference>
<dbReference type="SUPFAM" id="SSF50193">
    <property type="entry name" value="Ribosomal protein L14"/>
    <property type="match status" value="1"/>
</dbReference>
<evidence type="ECO:0000255" key="1">
    <source>
        <dbReference type="HAMAP-Rule" id="MF_01367"/>
    </source>
</evidence>
<evidence type="ECO:0000305" key="2"/>
<sequence>MKPISASIVRALPVGAYLNVADNSGAKVVKLIAVKGYKGRKRRLAKAGIADLVIVSVRDGKPDMIGQIFKAVVVRMKKEWRRRDGTRIKFEDNAVALLKDDYGTPKGTIIKTPIAKEVAERWPDLAKIARIIV</sequence>
<reference key="1">
    <citation type="journal article" date="2003" name="Proc. Natl. Acad. Sci. U.S.A.">
        <title>The genome of Nanoarchaeum equitans: insights into early archaeal evolution and derived parasitism.</title>
        <authorList>
            <person name="Waters E."/>
            <person name="Hohn M.J."/>
            <person name="Ahel I."/>
            <person name="Graham D.E."/>
            <person name="Adams M.D."/>
            <person name="Barnstead M."/>
            <person name="Beeson K.Y."/>
            <person name="Bibbs L."/>
            <person name="Bolanos R."/>
            <person name="Keller M."/>
            <person name="Kretz K."/>
            <person name="Lin X."/>
            <person name="Mathur E."/>
            <person name="Ni J."/>
            <person name="Podar M."/>
            <person name="Richardson T."/>
            <person name="Sutton G.G."/>
            <person name="Simon M."/>
            <person name="Soell D."/>
            <person name="Stetter K.O."/>
            <person name="Short J.M."/>
            <person name="Noorderwier M."/>
        </authorList>
    </citation>
    <scope>NUCLEOTIDE SEQUENCE [LARGE SCALE GENOMIC DNA]</scope>
    <source>
        <strain>Kin4-M</strain>
    </source>
</reference>